<accession>A8GUK1</accession>
<organism>
    <name type="scientific">Rickettsia bellii (strain OSU 85-389)</name>
    <dbReference type="NCBI Taxonomy" id="391896"/>
    <lineage>
        <taxon>Bacteria</taxon>
        <taxon>Pseudomonadati</taxon>
        <taxon>Pseudomonadota</taxon>
        <taxon>Alphaproteobacteria</taxon>
        <taxon>Rickettsiales</taxon>
        <taxon>Rickettsiaceae</taxon>
        <taxon>Rickettsieae</taxon>
        <taxon>Rickettsia</taxon>
        <taxon>belli group</taxon>
    </lineage>
</organism>
<proteinExistence type="inferred from homology"/>
<evidence type="ECO:0000255" key="1">
    <source>
        <dbReference type="HAMAP-Rule" id="MF_00291"/>
    </source>
</evidence>
<evidence type="ECO:0000256" key="2">
    <source>
        <dbReference type="SAM" id="MobiDB-lite"/>
    </source>
</evidence>
<evidence type="ECO:0000305" key="3"/>
<protein>
    <recommendedName>
        <fullName evidence="1">Small ribosomal subunit protein uS2</fullName>
    </recommendedName>
    <alternativeName>
        <fullName evidence="3">30S ribosomal protein S2</fullName>
    </alternativeName>
</protein>
<reference key="1">
    <citation type="submission" date="2007-09" db="EMBL/GenBank/DDBJ databases">
        <title>Complete genome sequencing of Rickettsia bellii.</title>
        <authorList>
            <person name="Madan A."/>
            <person name="Lee H."/>
            <person name="Madan A."/>
            <person name="Yoon J.-G."/>
            <person name="Ryu G.-Y."/>
            <person name="Dasch G."/>
            <person name="Ereemeva M."/>
        </authorList>
    </citation>
    <scope>NUCLEOTIDE SEQUENCE [LARGE SCALE GENOMIC DNA]</scope>
    <source>
        <strain>OSU 85-389</strain>
    </source>
</reference>
<feature type="chain" id="PRO_1000004054" description="Small ribosomal subunit protein uS2">
    <location>
        <begin position="1"/>
        <end position="291"/>
    </location>
</feature>
<feature type="region of interest" description="Disordered" evidence="2">
    <location>
        <begin position="270"/>
        <end position="291"/>
    </location>
</feature>
<sequence>MSKIPPVNVKDLLDAGVHFGHKTSRWNPKMAPYIYGERDEVHIIDLRQTAALMNVALNAIYETVKNDGKVLFVSTKIQASDIIAEYAEKCGQYYVNHRWLGGMLTNWKTISGSIEKLNKLEQTLENEEACIGYTKKEILDMNRKKDKLLLSLAGIRELHSKPDLIVIIDTNKEHIAISEAVRLDIPIVAVVDTNSNPDHIDYPIPGNDDAIRSIRFYCSLFADAALQGLEESMKASGVDLGSIQEHGDKNLAPKNVSKLKQAKKFSKTKNINEEANTEFEQALSDADEDKN</sequence>
<comment type="similarity">
    <text evidence="1">Belongs to the universal ribosomal protein uS2 family.</text>
</comment>
<name>RS2_RICB8</name>
<keyword id="KW-0687">Ribonucleoprotein</keyword>
<keyword id="KW-0689">Ribosomal protein</keyword>
<dbReference type="EMBL" id="CP000849">
    <property type="protein sequence ID" value="ABV78497.1"/>
    <property type="molecule type" value="Genomic_DNA"/>
</dbReference>
<dbReference type="RefSeq" id="WP_011477933.1">
    <property type="nucleotide sequence ID" value="NC_009883.1"/>
</dbReference>
<dbReference type="SMR" id="A8GUK1"/>
<dbReference type="KEGG" id="rbo:A1I_00455"/>
<dbReference type="HOGENOM" id="CLU_040318_2_1_5"/>
<dbReference type="GO" id="GO:0022627">
    <property type="term" value="C:cytosolic small ribosomal subunit"/>
    <property type="evidence" value="ECO:0007669"/>
    <property type="project" value="TreeGrafter"/>
</dbReference>
<dbReference type="GO" id="GO:0003735">
    <property type="term" value="F:structural constituent of ribosome"/>
    <property type="evidence" value="ECO:0007669"/>
    <property type="project" value="InterPro"/>
</dbReference>
<dbReference type="GO" id="GO:0006412">
    <property type="term" value="P:translation"/>
    <property type="evidence" value="ECO:0007669"/>
    <property type="project" value="UniProtKB-UniRule"/>
</dbReference>
<dbReference type="CDD" id="cd01425">
    <property type="entry name" value="RPS2"/>
    <property type="match status" value="1"/>
</dbReference>
<dbReference type="Gene3D" id="3.40.50.10490">
    <property type="entry name" value="Glucose-6-phosphate isomerase like protein, domain 1"/>
    <property type="match status" value="1"/>
</dbReference>
<dbReference type="Gene3D" id="1.10.287.610">
    <property type="entry name" value="Helix hairpin bin"/>
    <property type="match status" value="1"/>
</dbReference>
<dbReference type="HAMAP" id="MF_00291_B">
    <property type="entry name" value="Ribosomal_uS2_B"/>
    <property type="match status" value="1"/>
</dbReference>
<dbReference type="InterPro" id="IPR001865">
    <property type="entry name" value="Ribosomal_uS2"/>
</dbReference>
<dbReference type="InterPro" id="IPR005706">
    <property type="entry name" value="Ribosomal_uS2_bac/mit/plastid"/>
</dbReference>
<dbReference type="InterPro" id="IPR018130">
    <property type="entry name" value="Ribosomal_uS2_CS"/>
</dbReference>
<dbReference type="InterPro" id="IPR023591">
    <property type="entry name" value="Ribosomal_uS2_flav_dom_sf"/>
</dbReference>
<dbReference type="NCBIfam" id="TIGR01011">
    <property type="entry name" value="rpsB_bact"/>
    <property type="match status" value="1"/>
</dbReference>
<dbReference type="PANTHER" id="PTHR12534">
    <property type="entry name" value="30S RIBOSOMAL PROTEIN S2 PROKARYOTIC AND ORGANELLAR"/>
    <property type="match status" value="1"/>
</dbReference>
<dbReference type="PANTHER" id="PTHR12534:SF0">
    <property type="entry name" value="SMALL RIBOSOMAL SUBUNIT PROTEIN US2M"/>
    <property type="match status" value="1"/>
</dbReference>
<dbReference type="Pfam" id="PF00318">
    <property type="entry name" value="Ribosomal_S2"/>
    <property type="match status" value="1"/>
</dbReference>
<dbReference type="PRINTS" id="PR00395">
    <property type="entry name" value="RIBOSOMALS2"/>
</dbReference>
<dbReference type="SUPFAM" id="SSF52313">
    <property type="entry name" value="Ribosomal protein S2"/>
    <property type="match status" value="1"/>
</dbReference>
<dbReference type="PROSITE" id="PS00962">
    <property type="entry name" value="RIBOSOMAL_S2_1"/>
    <property type="match status" value="1"/>
</dbReference>
<gene>
    <name evidence="1" type="primary">rpsB</name>
    <name type="ordered locus">A1I_00455</name>
</gene>